<dbReference type="EC" id="3.1.21.10" evidence="1"/>
<dbReference type="EMBL" id="CP000319">
    <property type="protein sequence ID" value="ABE64252.1"/>
    <property type="status" value="ALT_INIT"/>
    <property type="molecule type" value="Genomic_DNA"/>
</dbReference>
<dbReference type="RefSeq" id="WP_041358339.1">
    <property type="nucleotide sequence ID" value="NC_007964.1"/>
</dbReference>
<dbReference type="SMR" id="Q1QHP5"/>
<dbReference type="STRING" id="323097.Nham_3523"/>
<dbReference type="KEGG" id="nha:Nham_3523"/>
<dbReference type="eggNOG" id="COG0817">
    <property type="taxonomic scope" value="Bacteria"/>
</dbReference>
<dbReference type="HOGENOM" id="CLU_091257_1_0_5"/>
<dbReference type="OrthoDB" id="9805499at2"/>
<dbReference type="Proteomes" id="UP000001953">
    <property type="component" value="Chromosome"/>
</dbReference>
<dbReference type="GO" id="GO:0005737">
    <property type="term" value="C:cytoplasm"/>
    <property type="evidence" value="ECO:0007669"/>
    <property type="project" value="UniProtKB-SubCell"/>
</dbReference>
<dbReference type="GO" id="GO:0048476">
    <property type="term" value="C:Holliday junction resolvase complex"/>
    <property type="evidence" value="ECO:0007669"/>
    <property type="project" value="UniProtKB-UniRule"/>
</dbReference>
<dbReference type="GO" id="GO:0008821">
    <property type="term" value="F:crossover junction DNA endonuclease activity"/>
    <property type="evidence" value="ECO:0007669"/>
    <property type="project" value="UniProtKB-UniRule"/>
</dbReference>
<dbReference type="GO" id="GO:0003677">
    <property type="term" value="F:DNA binding"/>
    <property type="evidence" value="ECO:0007669"/>
    <property type="project" value="UniProtKB-KW"/>
</dbReference>
<dbReference type="GO" id="GO:0000287">
    <property type="term" value="F:magnesium ion binding"/>
    <property type="evidence" value="ECO:0007669"/>
    <property type="project" value="UniProtKB-UniRule"/>
</dbReference>
<dbReference type="GO" id="GO:0006310">
    <property type="term" value="P:DNA recombination"/>
    <property type="evidence" value="ECO:0007669"/>
    <property type="project" value="UniProtKB-UniRule"/>
</dbReference>
<dbReference type="GO" id="GO:0006281">
    <property type="term" value="P:DNA repair"/>
    <property type="evidence" value="ECO:0007669"/>
    <property type="project" value="UniProtKB-UniRule"/>
</dbReference>
<dbReference type="CDD" id="cd16962">
    <property type="entry name" value="RuvC"/>
    <property type="match status" value="1"/>
</dbReference>
<dbReference type="FunFam" id="3.30.420.10:FF:000002">
    <property type="entry name" value="Crossover junction endodeoxyribonuclease RuvC"/>
    <property type="match status" value="1"/>
</dbReference>
<dbReference type="Gene3D" id="3.30.420.10">
    <property type="entry name" value="Ribonuclease H-like superfamily/Ribonuclease H"/>
    <property type="match status" value="1"/>
</dbReference>
<dbReference type="HAMAP" id="MF_00034">
    <property type="entry name" value="RuvC"/>
    <property type="match status" value="1"/>
</dbReference>
<dbReference type="InterPro" id="IPR012337">
    <property type="entry name" value="RNaseH-like_sf"/>
</dbReference>
<dbReference type="InterPro" id="IPR036397">
    <property type="entry name" value="RNaseH_sf"/>
</dbReference>
<dbReference type="InterPro" id="IPR020563">
    <property type="entry name" value="X-over_junc_endoDNase_Mg_BS"/>
</dbReference>
<dbReference type="InterPro" id="IPR002176">
    <property type="entry name" value="X-over_junc_endoDNase_RuvC"/>
</dbReference>
<dbReference type="NCBIfam" id="TIGR00228">
    <property type="entry name" value="ruvC"/>
    <property type="match status" value="1"/>
</dbReference>
<dbReference type="PANTHER" id="PTHR30194">
    <property type="entry name" value="CROSSOVER JUNCTION ENDODEOXYRIBONUCLEASE RUVC"/>
    <property type="match status" value="1"/>
</dbReference>
<dbReference type="PANTHER" id="PTHR30194:SF3">
    <property type="entry name" value="CROSSOVER JUNCTION ENDODEOXYRIBONUCLEASE RUVC"/>
    <property type="match status" value="1"/>
</dbReference>
<dbReference type="Pfam" id="PF02075">
    <property type="entry name" value="RuvC"/>
    <property type="match status" value="1"/>
</dbReference>
<dbReference type="PRINTS" id="PR00696">
    <property type="entry name" value="RSOLVASERUVC"/>
</dbReference>
<dbReference type="SUPFAM" id="SSF53098">
    <property type="entry name" value="Ribonuclease H-like"/>
    <property type="match status" value="1"/>
</dbReference>
<dbReference type="PROSITE" id="PS01321">
    <property type="entry name" value="RUVC"/>
    <property type="match status" value="1"/>
</dbReference>
<comment type="function">
    <text evidence="1">The RuvA-RuvB-RuvC complex processes Holliday junction (HJ) DNA during genetic recombination and DNA repair. Endonuclease that resolves HJ intermediates. Cleaves cruciform DNA by making single-stranded nicks across the HJ at symmetrical positions within the homologous arms, yielding a 5'-phosphate and a 3'-hydroxyl group; requires a central core of homology in the junction. The consensus cleavage sequence is 5'-(A/T)TT(C/G)-3'. Cleavage occurs on the 3'-side of the TT dinucleotide at the point of strand exchange. HJ branch migration catalyzed by RuvA-RuvB allows RuvC to scan DNA until it finds its consensus sequence, where it cleaves and resolves the cruciform DNA.</text>
</comment>
<comment type="catalytic activity">
    <reaction evidence="1">
        <text>Endonucleolytic cleavage at a junction such as a reciprocal single-stranded crossover between two homologous DNA duplexes (Holliday junction).</text>
        <dbReference type="EC" id="3.1.21.10"/>
    </reaction>
</comment>
<comment type="cofactor">
    <cofactor evidence="1">
        <name>Mg(2+)</name>
        <dbReference type="ChEBI" id="CHEBI:18420"/>
    </cofactor>
    <text evidence="1">Binds 2 Mg(2+) ion per subunit.</text>
</comment>
<comment type="subunit">
    <text evidence="1">Homodimer which binds Holliday junction (HJ) DNA. The HJ becomes 2-fold symmetrical on binding to RuvC with unstacked arms; it has a different conformation from HJ DNA in complex with RuvA. In the full resolvosome a probable DNA-RuvA(4)-RuvB(12)-RuvC(2) complex forms which resolves the HJ.</text>
</comment>
<comment type="subcellular location">
    <subcellularLocation>
        <location evidence="1">Cytoplasm</location>
    </subcellularLocation>
</comment>
<comment type="similarity">
    <text evidence="1">Belongs to the RuvC family.</text>
</comment>
<comment type="sequence caution" evidence="2">
    <conflict type="erroneous initiation">
        <sequence resource="EMBL-CDS" id="ABE64252"/>
    </conflict>
    <text>Extended N-terminus.</text>
</comment>
<proteinExistence type="inferred from homology"/>
<evidence type="ECO:0000255" key="1">
    <source>
        <dbReference type="HAMAP-Rule" id="MF_00034"/>
    </source>
</evidence>
<evidence type="ECO:0000305" key="2"/>
<accession>Q1QHP5</accession>
<sequence>MTSSPIRILGIDPGLRRTGWGVLDIEGNRLMFVGCGSVETREQMALASRLLAIHEGLGRVLDEFRPAEAAIEQTFVNKDGVATLKLGQARGVAMLAPAMFGIVVAEYAPNQVKKTVVGAGHADKTQIQAMLKILLPKADPKSADAADALAIAITHAHHRGAAALRMKVAG</sequence>
<feature type="chain" id="PRO_0000332433" description="Crossover junction endodeoxyribonuclease RuvC">
    <location>
        <begin position="1"/>
        <end position="170"/>
    </location>
</feature>
<feature type="active site" evidence="1">
    <location>
        <position position="12"/>
    </location>
</feature>
<feature type="active site" evidence="1">
    <location>
        <position position="72"/>
    </location>
</feature>
<feature type="active site" evidence="1">
    <location>
        <position position="144"/>
    </location>
</feature>
<feature type="binding site" evidence="1">
    <location>
        <position position="12"/>
    </location>
    <ligand>
        <name>Mg(2+)</name>
        <dbReference type="ChEBI" id="CHEBI:18420"/>
        <label>1</label>
    </ligand>
</feature>
<feature type="binding site" evidence="1">
    <location>
        <position position="72"/>
    </location>
    <ligand>
        <name>Mg(2+)</name>
        <dbReference type="ChEBI" id="CHEBI:18420"/>
        <label>2</label>
    </ligand>
</feature>
<feature type="binding site" evidence="1">
    <location>
        <position position="144"/>
    </location>
    <ligand>
        <name>Mg(2+)</name>
        <dbReference type="ChEBI" id="CHEBI:18420"/>
        <label>1</label>
    </ligand>
</feature>
<gene>
    <name evidence="1" type="primary">ruvC</name>
    <name type="ordered locus">Nham_3523</name>
</gene>
<protein>
    <recommendedName>
        <fullName evidence="1">Crossover junction endodeoxyribonuclease RuvC</fullName>
        <ecNumber evidence="1">3.1.21.10</ecNumber>
    </recommendedName>
    <alternativeName>
        <fullName evidence="1">Holliday junction nuclease RuvC</fullName>
    </alternativeName>
    <alternativeName>
        <fullName evidence="1">Holliday junction resolvase RuvC</fullName>
    </alternativeName>
</protein>
<name>RUVC_NITHX</name>
<keyword id="KW-0963">Cytoplasm</keyword>
<keyword id="KW-0227">DNA damage</keyword>
<keyword id="KW-0233">DNA recombination</keyword>
<keyword id="KW-0234">DNA repair</keyword>
<keyword id="KW-0238">DNA-binding</keyword>
<keyword id="KW-0255">Endonuclease</keyword>
<keyword id="KW-0378">Hydrolase</keyword>
<keyword id="KW-0460">Magnesium</keyword>
<keyword id="KW-0479">Metal-binding</keyword>
<keyword id="KW-0540">Nuclease</keyword>
<keyword id="KW-1185">Reference proteome</keyword>
<reference key="1">
    <citation type="submission" date="2006-03" db="EMBL/GenBank/DDBJ databases">
        <title>Complete sequence of chromosome of Nitrobacter hamburgensis X14.</title>
        <authorList>
            <consortium name="US DOE Joint Genome Institute"/>
            <person name="Copeland A."/>
            <person name="Lucas S."/>
            <person name="Lapidus A."/>
            <person name="Barry K."/>
            <person name="Detter J.C."/>
            <person name="Glavina del Rio T."/>
            <person name="Hammon N."/>
            <person name="Israni S."/>
            <person name="Dalin E."/>
            <person name="Tice H."/>
            <person name="Pitluck S."/>
            <person name="Chain P."/>
            <person name="Malfatti S."/>
            <person name="Shin M."/>
            <person name="Vergez L."/>
            <person name="Schmutz J."/>
            <person name="Larimer F."/>
            <person name="Land M."/>
            <person name="Hauser L."/>
            <person name="Kyrpides N."/>
            <person name="Ivanova N."/>
            <person name="Ward B."/>
            <person name="Arp D."/>
            <person name="Klotz M."/>
            <person name="Stein L."/>
            <person name="O'Mullan G."/>
            <person name="Starkenburg S."/>
            <person name="Sayavedra L."/>
            <person name="Poret-Peterson A.T."/>
            <person name="Gentry M.E."/>
            <person name="Bruce D."/>
            <person name="Richardson P."/>
        </authorList>
    </citation>
    <scope>NUCLEOTIDE SEQUENCE [LARGE SCALE GENOMIC DNA]</scope>
    <source>
        <strain>DSM 10229 / NCIMB 13809 / X14</strain>
    </source>
</reference>
<organism>
    <name type="scientific">Nitrobacter hamburgensis (strain DSM 10229 / NCIMB 13809 / X14)</name>
    <dbReference type="NCBI Taxonomy" id="323097"/>
    <lineage>
        <taxon>Bacteria</taxon>
        <taxon>Pseudomonadati</taxon>
        <taxon>Pseudomonadota</taxon>
        <taxon>Alphaproteobacteria</taxon>
        <taxon>Hyphomicrobiales</taxon>
        <taxon>Nitrobacteraceae</taxon>
        <taxon>Nitrobacter</taxon>
    </lineage>
</organism>